<name>ACP_BARHE</name>
<protein>
    <recommendedName>
        <fullName evidence="1">Acyl carrier protein</fullName>
        <shortName evidence="1">ACP</shortName>
    </recommendedName>
</protein>
<feature type="chain" id="PRO_0000180106" description="Acyl carrier protein">
    <location>
        <begin position="1"/>
        <end position="78"/>
    </location>
</feature>
<feature type="domain" description="Carrier" evidence="2">
    <location>
        <begin position="2"/>
        <end position="77"/>
    </location>
</feature>
<feature type="modified residue" description="O-(pantetheine 4'-phosphoryl)serine" evidence="2">
    <location>
        <position position="37"/>
    </location>
</feature>
<comment type="function">
    <text evidence="1">Carrier of the growing fatty acid chain in fatty acid biosynthesis.</text>
</comment>
<comment type="pathway">
    <text evidence="1">Lipid metabolism; fatty acid biosynthesis.</text>
</comment>
<comment type="subcellular location">
    <subcellularLocation>
        <location evidence="1">Cytoplasm</location>
    </subcellularLocation>
</comment>
<comment type="PTM">
    <text evidence="1">4'-phosphopantetheine is transferred from CoA to a specific serine of apo-ACP by AcpS. This modification is essential for activity because fatty acids are bound in thioester linkage to the sulfhydryl of the prosthetic group.</text>
</comment>
<comment type="similarity">
    <text evidence="1">Belongs to the acyl carrier protein (ACP) family.</text>
</comment>
<organism>
    <name type="scientific">Bartonella henselae (strain ATCC 49882 / DSM 28221 / CCUG 30454 / Houston 1)</name>
    <name type="common">Rochalimaea henselae</name>
    <dbReference type="NCBI Taxonomy" id="283166"/>
    <lineage>
        <taxon>Bacteria</taxon>
        <taxon>Pseudomonadati</taxon>
        <taxon>Pseudomonadota</taxon>
        <taxon>Alphaproteobacteria</taxon>
        <taxon>Hyphomicrobiales</taxon>
        <taxon>Bartonellaceae</taxon>
        <taxon>Bartonella</taxon>
    </lineage>
</organism>
<accession>Q6G442</accession>
<proteinExistence type="inferred from homology"/>
<keyword id="KW-0963">Cytoplasm</keyword>
<keyword id="KW-0275">Fatty acid biosynthesis</keyword>
<keyword id="KW-0276">Fatty acid metabolism</keyword>
<keyword id="KW-0444">Lipid biosynthesis</keyword>
<keyword id="KW-0443">Lipid metabolism</keyword>
<keyword id="KW-0596">Phosphopantetheine</keyword>
<keyword id="KW-0597">Phosphoprotein</keyword>
<dbReference type="EMBL" id="BX897699">
    <property type="protein sequence ID" value="CAF27344.1"/>
    <property type="molecule type" value="Genomic_DNA"/>
</dbReference>
<dbReference type="RefSeq" id="WP_011180466.1">
    <property type="nucleotide sequence ID" value="NZ_LRIJ02000001.1"/>
</dbReference>
<dbReference type="SMR" id="Q6G442"/>
<dbReference type="PaxDb" id="283166-BH05360"/>
<dbReference type="EnsemblBacteria" id="CAF27344">
    <property type="protein sequence ID" value="CAF27344"/>
    <property type="gene ID" value="BH05360"/>
</dbReference>
<dbReference type="KEGG" id="bhe:BH05360"/>
<dbReference type="eggNOG" id="COG0236">
    <property type="taxonomic scope" value="Bacteria"/>
</dbReference>
<dbReference type="OrthoDB" id="9804551at2"/>
<dbReference type="UniPathway" id="UPA00094"/>
<dbReference type="Proteomes" id="UP000000421">
    <property type="component" value="Chromosome"/>
</dbReference>
<dbReference type="GO" id="GO:0005829">
    <property type="term" value="C:cytosol"/>
    <property type="evidence" value="ECO:0007669"/>
    <property type="project" value="TreeGrafter"/>
</dbReference>
<dbReference type="GO" id="GO:0016020">
    <property type="term" value="C:membrane"/>
    <property type="evidence" value="ECO:0007669"/>
    <property type="project" value="GOC"/>
</dbReference>
<dbReference type="GO" id="GO:0000035">
    <property type="term" value="F:acyl binding"/>
    <property type="evidence" value="ECO:0007669"/>
    <property type="project" value="TreeGrafter"/>
</dbReference>
<dbReference type="GO" id="GO:0000036">
    <property type="term" value="F:acyl carrier activity"/>
    <property type="evidence" value="ECO:0007669"/>
    <property type="project" value="UniProtKB-UniRule"/>
</dbReference>
<dbReference type="GO" id="GO:0031177">
    <property type="term" value="F:phosphopantetheine binding"/>
    <property type="evidence" value="ECO:0007669"/>
    <property type="project" value="InterPro"/>
</dbReference>
<dbReference type="GO" id="GO:0009245">
    <property type="term" value="P:lipid A biosynthetic process"/>
    <property type="evidence" value="ECO:0007669"/>
    <property type="project" value="TreeGrafter"/>
</dbReference>
<dbReference type="FunFam" id="1.10.1200.10:FF:000001">
    <property type="entry name" value="Acyl carrier protein"/>
    <property type="match status" value="1"/>
</dbReference>
<dbReference type="Gene3D" id="1.10.1200.10">
    <property type="entry name" value="ACP-like"/>
    <property type="match status" value="1"/>
</dbReference>
<dbReference type="HAMAP" id="MF_01217">
    <property type="entry name" value="Acyl_carrier"/>
    <property type="match status" value="1"/>
</dbReference>
<dbReference type="InterPro" id="IPR003231">
    <property type="entry name" value="ACP"/>
</dbReference>
<dbReference type="InterPro" id="IPR036736">
    <property type="entry name" value="ACP-like_sf"/>
</dbReference>
<dbReference type="InterPro" id="IPR020806">
    <property type="entry name" value="PKS_PP-bd"/>
</dbReference>
<dbReference type="InterPro" id="IPR009081">
    <property type="entry name" value="PP-bd_ACP"/>
</dbReference>
<dbReference type="InterPro" id="IPR006162">
    <property type="entry name" value="Ppantetheine_attach_site"/>
</dbReference>
<dbReference type="NCBIfam" id="TIGR00517">
    <property type="entry name" value="acyl_carrier"/>
    <property type="match status" value="1"/>
</dbReference>
<dbReference type="NCBIfam" id="NF002148">
    <property type="entry name" value="PRK00982.1-2"/>
    <property type="match status" value="1"/>
</dbReference>
<dbReference type="NCBIfam" id="NF002149">
    <property type="entry name" value="PRK00982.1-3"/>
    <property type="match status" value="1"/>
</dbReference>
<dbReference type="NCBIfam" id="NF002150">
    <property type="entry name" value="PRK00982.1-4"/>
    <property type="match status" value="1"/>
</dbReference>
<dbReference type="NCBIfam" id="NF002151">
    <property type="entry name" value="PRK00982.1-5"/>
    <property type="match status" value="1"/>
</dbReference>
<dbReference type="PANTHER" id="PTHR20863">
    <property type="entry name" value="ACYL CARRIER PROTEIN"/>
    <property type="match status" value="1"/>
</dbReference>
<dbReference type="PANTHER" id="PTHR20863:SF76">
    <property type="entry name" value="CARRIER DOMAIN-CONTAINING PROTEIN"/>
    <property type="match status" value="1"/>
</dbReference>
<dbReference type="Pfam" id="PF00550">
    <property type="entry name" value="PP-binding"/>
    <property type="match status" value="1"/>
</dbReference>
<dbReference type="SMART" id="SM00823">
    <property type="entry name" value="PKS_PP"/>
    <property type="match status" value="1"/>
</dbReference>
<dbReference type="SUPFAM" id="SSF47336">
    <property type="entry name" value="ACP-like"/>
    <property type="match status" value="1"/>
</dbReference>
<dbReference type="PROSITE" id="PS50075">
    <property type="entry name" value="CARRIER"/>
    <property type="match status" value="1"/>
</dbReference>
<dbReference type="PROSITE" id="PS00012">
    <property type="entry name" value="PHOSPHOPANTETHEINE"/>
    <property type="match status" value="1"/>
</dbReference>
<reference key="1">
    <citation type="journal article" date="2004" name="Proc. Natl. Acad. Sci. U.S.A.">
        <title>The louse-borne human pathogen Bartonella quintana is a genomic derivative of the zoonotic agent Bartonella henselae.</title>
        <authorList>
            <person name="Alsmark U.C.M."/>
            <person name="Frank A.C."/>
            <person name="Karlberg E.O."/>
            <person name="Legault B.-A."/>
            <person name="Ardell D.H."/>
            <person name="Canbaeck B."/>
            <person name="Eriksson A.-S."/>
            <person name="Naeslund A.K."/>
            <person name="Handley S.A."/>
            <person name="Huvet M."/>
            <person name="La Scola B."/>
            <person name="Holmberg M."/>
            <person name="Andersson S.G.E."/>
        </authorList>
    </citation>
    <scope>NUCLEOTIDE SEQUENCE [LARGE SCALE GENOMIC DNA]</scope>
    <source>
        <strain>ATCC 49882 / DSM 28221 / CCUG 30454 / Houston 1</strain>
    </source>
</reference>
<evidence type="ECO:0000255" key="1">
    <source>
        <dbReference type="HAMAP-Rule" id="MF_01217"/>
    </source>
</evidence>
<evidence type="ECO:0000255" key="2">
    <source>
        <dbReference type="PROSITE-ProRule" id="PRU00258"/>
    </source>
</evidence>
<sequence length="78" mass="8446">MSDTVERVKKIIVEHLGVNADKVVEDASFIDDLGADSLDTVELVMAFEEEFGVEIPDEAAETIFTVGDAVKFIDKASA</sequence>
<gene>
    <name evidence="1" type="primary">acpP</name>
    <name type="ordered locus">BH05360</name>
</gene>